<gene>
    <name evidence="1" type="primary">lpxD</name>
    <name type="ordered locus">Sfum_3747</name>
</gene>
<evidence type="ECO:0000255" key="1">
    <source>
        <dbReference type="HAMAP-Rule" id="MF_00523"/>
    </source>
</evidence>
<comment type="function">
    <text evidence="1">Catalyzes the N-acylation of UDP-3-O-acylglucosamine using 3-hydroxyacyl-ACP as the acyl donor. Is involved in the biosynthesis of lipid A, a phosphorylated glycolipid that anchors the lipopolysaccharide to the outer membrane of the cell.</text>
</comment>
<comment type="catalytic activity">
    <reaction evidence="1">
        <text>a UDP-3-O-[(3R)-3-hydroxyacyl]-alpha-D-glucosamine + a (3R)-hydroxyacyl-[ACP] = a UDP-2-N,3-O-bis[(3R)-3-hydroxyacyl]-alpha-D-glucosamine + holo-[ACP] + H(+)</text>
        <dbReference type="Rhea" id="RHEA:53836"/>
        <dbReference type="Rhea" id="RHEA-COMP:9685"/>
        <dbReference type="Rhea" id="RHEA-COMP:9945"/>
        <dbReference type="ChEBI" id="CHEBI:15378"/>
        <dbReference type="ChEBI" id="CHEBI:64479"/>
        <dbReference type="ChEBI" id="CHEBI:78827"/>
        <dbReference type="ChEBI" id="CHEBI:137740"/>
        <dbReference type="ChEBI" id="CHEBI:137748"/>
        <dbReference type="EC" id="2.3.1.191"/>
    </reaction>
</comment>
<comment type="pathway">
    <text evidence="1">Bacterial outer membrane biogenesis; LPS lipid A biosynthesis.</text>
</comment>
<comment type="subunit">
    <text evidence="1">Homotrimer.</text>
</comment>
<comment type="similarity">
    <text evidence="1">Belongs to the transferase hexapeptide repeat family. LpxD subfamily.</text>
</comment>
<dbReference type="EC" id="2.3.1.191" evidence="1"/>
<dbReference type="EMBL" id="CP000478">
    <property type="protein sequence ID" value="ABK19417.1"/>
    <property type="molecule type" value="Genomic_DNA"/>
</dbReference>
<dbReference type="RefSeq" id="WP_011700542.1">
    <property type="nucleotide sequence ID" value="NC_008554.1"/>
</dbReference>
<dbReference type="SMR" id="A0LPR5"/>
<dbReference type="FunCoup" id="A0LPR5">
    <property type="interactions" value="395"/>
</dbReference>
<dbReference type="STRING" id="335543.Sfum_3747"/>
<dbReference type="KEGG" id="sfu:Sfum_3747"/>
<dbReference type="eggNOG" id="COG1044">
    <property type="taxonomic scope" value="Bacteria"/>
</dbReference>
<dbReference type="HOGENOM" id="CLU_049865_0_0_7"/>
<dbReference type="InParanoid" id="A0LPR5"/>
<dbReference type="OrthoDB" id="9784739at2"/>
<dbReference type="UniPathway" id="UPA00973"/>
<dbReference type="Proteomes" id="UP000001784">
    <property type="component" value="Chromosome"/>
</dbReference>
<dbReference type="GO" id="GO:0016020">
    <property type="term" value="C:membrane"/>
    <property type="evidence" value="ECO:0007669"/>
    <property type="project" value="GOC"/>
</dbReference>
<dbReference type="GO" id="GO:0016410">
    <property type="term" value="F:N-acyltransferase activity"/>
    <property type="evidence" value="ECO:0007669"/>
    <property type="project" value="InterPro"/>
</dbReference>
<dbReference type="GO" id="GO:0009245">
    <property type="term" value="P:lipid A biosynthetic process"/>
    <property type="evidence" value="ECO:0007669"/>
    <property type="project" value="UniProtKB-UniRule"/>
</dbReference>
<dbReference type="CDD" id="cd03352">
    <property type="entry name" value="LbH_LpxD"/>
    <property type="match status" value="1"/>
</dbReference>
<dbReference type="Gene3D" id="2.160.10.10">
    <property type="entry name" value="Hexapeptide repeat proteins"/>
    <property type="match status" value="1"/>
</dbReference>
<dbReference type="Gene3D" id="3.40.1390.10">
    <property type="entry name" value="MurE/MurF, N-terminal domain"/>
    <property type="match status" value="1"/>
</dbReference>
<dbReference type="HAMAP" id="MF_00523">
    <property type="entry name" value="LpxD"/>
    <property type="match status" value="1"/>
</dbReference>
<dbReference type="InterPro" id="IPR001451">
    <property type="entry name" value="Hexapep"/>
</dbReference>
<dbReference type="InterPro" id="IPR018357">
    <property type="entry name" value="Hexapep_transf_CS"/>
</dbReference>
<dbReference type="InterPro" id="IPR007691">
    <property type="entry name" value="LpxD"/>
</dbReference>
<dbReference type="InterPro" id="IPR011004">
    <property type="entry name" value="Trimer_LpxA-like_sf"/>
</dbReference>
<dbReference type="InterPro" id="IPR020573">
    <property type="entry name" value="UDP_GlcNAc_AcTrfase_non-rep"/>
</dbReference>
<dbReference type="NCBIfam" id="TIGR01853">
    <property type="entry name" value="lipid_A_lpxD"/>
    <property type="match status" value="1"/>
</dbReference>
<dbReference type="NCBIfam" id="NF002060">
    <property type="entry name" value="PRK00892.1"/>
    <property type="match status" value="1"/>
</dbReference>
<dbReference type="PANTHER" id="PTHR43378">
    <property type="entry name" value="UDP-3-O-ACYLGLUCOSAMINE N-ACYLTRANSFERASE"/>
    <property type="match status" value="1"/>
</dbReference>
<dbReference type="PANTHER" id="PTHR43378:SF2">
    <property type="entry name" value="UDP-3-O-ACYLGLUCOSAMINE N-ACYLTRANSFERASE 1, MITOCHONDRIAL-RELATED"/>
    <property type="match status" value="1"/>
</dbReference>
<dbReference type="Pfam" id="PF00132">
    <property type="entry name" value="Hexapep"/>
    <property type="match status" value="1"/>
</dbReference>
<dbReference type="Pfam" id="PF04613">
    <property type="entry name" value="LpxD"/>
    <property type="match status" value="1"/>
</dbReference>
<dbReference type="SUPFAM" id="SSF51161">
    <property type="entry name" value="Trimeric LpxA-like enzymes"/>
    <property type="match status" value="1"/>
</dbReference>
<dbReference type="PROSITE" id="PS00101">
    <property type="entry name" value="HEXAPEP_TRANSFERASES"/>
    <property type="match status" value="1"/>
</dbReference>
<accession>A0LPR5</accession>
<name>LPXD_SYNFM</name>
<protein>
    <recommendedName>
        <fullName evidence="1">UDP-3-O-acylglucosamine N-acyltransferase</fullName>
        <ecNumber evidence="1">2.3.1.191</ecNumber>
    </recommendedName>
</protein>
<organism>
    <name type="scientific">Syntrophobacter fumaroxidans (strain DSM 10017 / MPOB)</name>
    <dbReference type="NCBI Taxonomy" id="335543"/>
    <lineage>
        <taxon>Bacteria</taxon>
        <taxon>Pseudomonadati</taxon>
        <taxon>Thermodesulfobacteriota</taxon>
        <taxon>Syntrophobacteria</taxon>
        <taxon>Syntrophobacterales</taxon>
        <taxon>Syntrophobacteraceae</taxon>
        <taxon>Syntrophobacter</taxon>
    </lineage>
</organism>
<proteinExistence type="inferred from homology"/>
<keyword id="KW-0012">Acyltransferase</keyword>
<keyword id="KW-0441">Lipid A biosynthesis</keyword>
<keyword id="KW-0444">Lipid biosynthesis</keyword>
<keyword id="KW-0443">Lipid metabolism</keyword>
<keyword id="KW-1185">Reference proteome</keyword>
<keyword id="KW-0677">Repeat</keyword>
<keyword id="KW-0808">Transferase</keyword>
<feature type="chain" id="PRO_1000060922" description="UDP-3-O-acylglucosamine N-acyltransferase">
    <location>
        <begin position="1"/>
        <end position="355"/>
    </location>
</feature>
<feature type="active site" description="Proton acceptor" evidence="1">
    <location>
        <position position="248"/>
    </location>
</feature>
<sequence>MESCFQGDSRKSYSLSELAEILGAAVRGDPAIRIRGVNSLEDALPDELSFITDVRYKPLLSKCRAAAIIVSPALAELEFPLLVAERPYVVFARAAQLFAEPPFLAPGVHPGAYIGPNVHLGEGVSVGPQAHIGEDCVVGPGTRIYGSAYLGPGVRVGENCMLYPGAVILDRCLLGNRVTVHSGTVVGSDGFGYAQDEKGRHVKIPQTGIVQIDDDVEIGANCTVDRATFGRTWVRRGAKIDNQVQIAHNVVIGEHAILVAQVGISGSTTLGSHVVLAGQVGVAGHIEIGDRARVGAKSGVHHSVGAGEDILGIPGVPAREWKRTYANIQRLARFREELRLLVEKVQRIEKALDGE</sequence>
<reference key="1">
    <citation type="submission" date="2006-10" db="EMBL/GenBank/DDBJ databases">
        <title>Complete sequence of Syntrophobacter fumaroxidans MPOB.</title>
        <authorList>
            <consortium name="US DOE Joint Genome Institute"/>
            <person name="Copeland A."/>
            <person name="Lucas S."/>
            <person name="Lapidus A."/>
            <person name="Barry K."/>
            <person name="Detter J.C."/>
            <person name="Glavina del Rio T."/>
            <person name="Hammon N."/>
            <person name="Israni S."/>
            <person name="Pitluck S."/>
            <person name="Goltsman E.G."/>
            <person name="Martinez M."/>
            <person name="Schmutz J."/>
            <person name="Larimer F."/>
            <person name="Land M."/>
            <person name="Hauser L."/>
            <person name="Kyrpides N."/>
            <person name="Kim E."/>
            <person name="Boone D.R."/>
            <person name="Brockman F."/>
            <person name="Culley D."/>
            <person name="Ferry J."/>
            <person name="Gunsalus R."/>
            <person name="McInerney M.J."/>
            <person name="Morrison M."/>
            <person name="Plugge C."/>
            <person name="Rohlin L."/>
            <person name="Scholten J."/>
            <person name="Sieber J."/>
            <person name="Stams A.J.M."/>
            <person name="Worm P."/>
            <person name="Henstra A.M."/>
            <person name="Richardson P."/>
        </authorList>
    </citation>
    <scope>NUCLEOTIDE SEQUENCE [LARGE SCALE GENOMIC DNA]</scope>
    <source>
        <strain>DSM 10017 / MPOB</strain>
    </source>
</reference>